<sequence length="393" mass="45163">MVQPHDHKSASPQDTVTSVSIQLLLFVDDRPSSQENIEQIQEHLERLKSEYPYDLQVIEIQQQPHLVEYFRLVATPALVKIVPEPRQTLAGSNIVDQLNKWWPRWQCAIKEAQDAQKVHNETNNQGDGDSPLNSVGYSAELIRLSDELFRLKKEKEELAEQIKFKDQVLAMLAHDLRSPLTAASIAVETLELANNQPDSPRIVQLKEQLYQQTRKQFRIMNRLITDILQASKSINAQLQLQHTHLYLQPLCLEILKQMGDQFQEKSLKIEKDIPQDLPPVYADEELIRQVIVNLLDNAIKYTPEEGTITVSILHRTTQKVQVSICDTGPGIPEEKQDRIFEGHFRLKRDEGKEGYGLGLSLCRKIIRAHYGQIWVDSTINQGSCFHFTLPVFR</sequence>
<protein>
    <recommendedName>
        <fullName evidence="1">Adaptive-response sensory kinase SasA</fullName>
        <ecNumber evidence="1">2.7.13.3</ecNumber>
    </recommendedName>
    <alternativeName>
        <fullName evidence="1">Sensor histidine kinase SasA</fullName>
    </alternativeName>
</protein>
<organism>
    <name type="scientific">Gloeothece citriformis (strain PCC 7424)</name>
    <name type="common">Cyanothece sp. (strain PCC 7424)</name>
    <dbReference type="NCBI Taxonomy" id="65393"/>
    <lineage>
        <taxon>Bacteria</taxon>
        <taxon>Bacillati</taxon>
        <taxon>Cyanobacteriota</taxon>
        <taxon>Cyanophyceae</taxon>
        <taxon>Oscillatoriophycideae</taxon>
        <taxon>Chroococcales</taxon>
        <taxon>Aphanothecaceae</taxon>
        <taxon>Gloeothece</taxon>
        <taxon>Gloeothece citriformis</taxon>
    </lineage>
</organism>
<comment type="function">
    <text evidence="1">Member of the two-component regulatory system SasA/RpaA involved in genome-wide circadian gene expression. One of several clock output pathways. Participates in the Kai clock protein complex, the main circadian regulator in cyanobacteria, via its interaction with KaiC. KaiC enhances the autophosphorylation activity of SasA, which then transfers its phosphate group to RpaA to activate it. In addition to its output function, recruits fold-shifted KaiB (KaiB(fs)) to KaiC to cooperatively form the KaiB(6):KaiC(6) complex (independent of SasA kinase activity). Required for robustness of the circadian rhythm of gene expression and is involved in clock output, also required for adaptation to light/dark cycles.</text>
</comment>
<comment type="catalytic activity">
    <reaction evidence="1">
        <text>ATP + protein L-histidine = ADP + protein N-phospho-L-histidine.</text>
        <dbReference type="EC" id="2.7.13.3"/>
    </reaction>
</comment>
<comment type="subunit">
    <text evidence="1">Homooligomerizes. Interacts with KaiC. Participates in the KaiABC clock complex, whose core is composed of a KaiC homohexamer, 6 KaiB and up to 6 KaiA dimers. SasA and KaiB(fs) compete to bind to KaiC.</text>
</comment>
<comment type="domain">
    <text evidence="1">The N-terminus interacts with KaiC, while the C-terminal histidine kinase domain autophosphorylates and is probably responsible for self-oligomerization. The N-terminal domain stimulates the C-terminus to autophosphorylate.</text>
</comment>
<accession>B7KFU0</accession>
<proteinExistence type="inferred from homology"/>
<keyword id="KW-0067">ATP-binding</keyword>
<keyword id="KW-0090">Biological rhythms</keyword>
<keyword id="KW-0418">Kinase</keyword>
<keyword id="KW-0547">Nucleotide-binding</keyword>
<keyword id="KW-0597">Phosphoprotein</keyword>
<keyword id="KW-1185">Reference proteome</keyword>
<keyword id="KW-0808">Transferase</keyword>
<keyword id="KW-0902">Two-component regulatory system</keyword>
<dbReference type="EC" id="2.7.13.3" evidence="1"/>
<dbReference type="EMBL" id="CP001291">
    <property type="protein sequence ID" value="ACK73415.1"/>
    <property type="molecule type" value="Genomic_DNA"/>
</dbReference>
<dbReference type="RefSeq" id="WP_015956995.1">
    <property type="nucleotide sequence ID" value="NC_011729.1"/>
</dbReference>
<dbReference type="SMR" id="B7KFU0"/>
<dbReference type="STRING" id="65393.PCC7424_5063"/>
<dbReference type="KEGG" id="cyc:PCC7424_5063"/>
<dbReference type="eggNOG" id="COG2205">
    <property type="taxonomic scope" value="Bacteria"/>
</dbReference>
<dbReference type="HOGENOM" id="CLU_723030_0_0_3"/>
<dbReference type="OrthoDB" id="9773956at2"/>
<dbReference type="Proteomes" id="UP000002384">
    <property type="component" value="Chromosome"/>
</dbReference>
<dbReference type="GO" id="GO:0005524">
    <property type="term" value="F:ATP binding"/>
    <property type="evidence" value="ECO:0007669"/>
    <property type="project" value="UniProtKB-KW"/>
</dbReference>
<dbReference type="GO" id="GO:0000155">
    <property type="term" value="F:phosphorelay sensor kinase activity"/>
    <property type="evidence" value="ECO:0007669"/>
    <property type="project" value="InterPro"/>
</dbReference>
<dbReference type="GO" id="GO:0007623">
    <property type="term" value="P:circadian rhythm"/>
    <property type="evidence" value="ECO:0007669"/>
    <property type="project" value="UniProtKB-UniRule"/>
</dbReference>
<dbReference type="CDD" id="cd00075">
    <property type="entry name" value="HATPase"/>
    <property type="match status" value="1"/>
</dbReference>
<dbReference type="CDD" id="cd00082">
    <property type="entry name" value="HisKA"/>
    <property type="match status" value="1"/>
</dbReference>
<dbReference type="CDD" id="cd02978">
    <property type="entry name" value="KaiB_like"/>
    <property type="match status" value="1"/>
</dbReference>
<dbReference type="FunFam" id="1.10.287.130:FF:000154">
    <property type="entry name" value="Adaptive-response sensory kinase"/>
    <property type="match status" value="1"/>
</dbReference>
<dbReference type="FunFam" id="3.30.565.10:FF:000006">
    <property type="entry name" value="Sensor histidine kinase WalK"/>
    <property type="match status" value="1"/>
</dbReference>
<dbReference type="Gene3D" id="1.10.287.130">
    <property type="match status" value="1"/>
</dbReference>
<dbReference type="Gene3D" id="3.40.30.10">
    <property type="entry name" value="Glutaredoxin"/>
    <property type="match status" value="1"/>
</dbReference>
<dbReference type="Gene3D" id="3.30.565.10">
    <property type="entry name" value="Histidine kinase-like ATPase, C-terminal domain"/>
    <property type="match status" value="1"/>
</dbReference>
<dbReference type="HAMAP" id="MF_01837">
    <property type="entry name" value="Kinase_SasA"/>
    <property type="match status" value="1"/>
</dbReference>
<dbReference type="InterPro" id="IPR036890">
    <property type="entry name" value="HATPase_C_sf"/>
</dbReference>
<dbReference type="InterPro" id="IPR005467">
    <property type="entry name" value="His_kinase_dom"/>
</dbReference>
<dbReference type="InterPro" id="IPR003661">
    <property type="entry name" value="HisK_dim/P_dom"/>
</dbReference>
<dbReference type="InterPro" id="IPR036097">
    <property type="entry name" value="HisK_dim/P_sf"/>
</dbReference>
<dbReference type="InterPro" id="IPR011649">
    <property type="entry name" value="KaiB_domain"/>
</dbReference>
<dbReference type="InterPro" id="IPR023527">
    <property type="entry name" value="Kinase_SasA"/>
</dbReference>
<dbReference type="InterPro" id="IPR050736">
    <property type="entry name" value="Sensor_HK_Regulatory"/>
</dbReference>
<dbReference type="InterPro" id="IPR004358">
    <property type="entry name" value="Sig_transdc_His_kin-like_C"/>
</dbReference>
<dbReference type="InterPro" id="IPR036249">
    <property type="entry name" value="Thioredoxin-like_sf"/>
</dbReference>
<dbReference type="NCBIfam" id="NF006800">
    <property type="entry name" value="PRK09303.1"/>
    <property type="match status" value="1"/>
</dbReference>
<dbReference type="PANTHER" id="PTHR43711:SF26">
    <property type="entry name" value="SENSOR HISTIDINE KINASE RCSC"/>
    <property type="match status" value="1"/>
</dbReference>
<dbReference type="PANTHER" id="PTHR43711">
    <property type="entry name" value="TWO-COMPONENT HISTIDINE KINASE"/>
    <property type="match status" value="1"/>
</dbReference>
<dbReference type="Pfam" id="PF02518">
    <property type="entry name" value="HATPase_c"/>
    <property type="match status" value="1"/>
</dbReference>
<dbReference type="Pfam" id="PF00512">
    <property type="entry name" value="HisKA"/>
    <property type="match status" value="1"/>
</dbReference>
<dbReference type="Pfam" id="PF07689">
    <property type="entry name" value="KaiB"/>
    <property type="match status" value="1"/>
</dbReference>
<dbReference type="PRINTS" id="PR00344">
    <property type="entry name" value="BCTRLSENSOR"/>
</dbReference>
<dbReference type="SMART" id="SM00387">
    <property type="entry name" value="HATPase_c"/>
    <property type="match status" value="1"/>
</dbReference>
<dbReference type="SMART" id="SM00388">
    <property type="entry name" value="HisKA"/>
    <property type="match status" value="1"/>
</dbReference>
<dbReference type="SMART" id="SM01248">
    <property type="entry name" value="KaiB"/>
    <property type="match status" value="1"/>
</dbReference>
<dbReference type="SUPFAM" id="SSF55874">
    <property type="entry name" value="ATPase domain of HSP90 chaperone/DNA topoisomerase II/histidine kinase"/>
    <property type="match status" value="1"/>
</dbReference>
<dbReference type="SUPFAM" id="SSF47384">
    <property type="entry name" value="Homodimeric domain of signal transducing histidine kinase"/>
    <property type="match status" value="1"/>
</dbReference>
<dbReference type="SUPFAM" id="SSF52833">
    <property type="entry name" value="Thioredoxin-like"/>
    <property type="match status" value="1"/>
</dbReference>
<dbReference type="PROSITE" id="PS50109">
    <property type="entry name" value="HIS_KIN"/>
    <property type="match status" value="1"/>
</dbReference>
<feature type="chain" id="PRO_1000188350" description="Adaptive-response sensory kinase SasA">
    <location>
        <begin position="1"/>
        <end position="393"/>
    </location>
</feature>
<feature type="domain" description="Histidine kinase" evidence="1">
    <location>
        <begin position="171"/>
        <end position="393"/>
    </location>
</feature>
<feature type="modified residue" description="Phosphohistidine; by autocatalysis" evidence="1">
    <location>
        <position position="174"/>
    </location>
</feature>
<name>SASA_GLOC7</name>
<gene>
    <name evidence="1" type="primary">sasA</name>
    <name type="ordered locus">PCC7424_5063</name>
</gene>
<evidence type="ECO:0000255" key="1">
    <source>
        <dbReference type="HAMAP-Rule" id="MF_01837"/>
    </source>
</evidence>
<reference key="1">
    <citation type="journal article" date="2011" name="MBio">
        <title>Novel metabolic attributes of the genus Cyanothece, comprising a group of unicellular nitrogen-fixing Cyanobacteria.</title>
        <authorList>
            <person name="Bandyopadhyay A."/>
            <person name="Elvitigala T."/>
            <person name="Welsh E."/>
            <person name="Stockel J."/>
            <person name="Liberton M."/>
            <person name="Min H."/>
            <person name="Sherman L.A."/>
            <person name="Pakrasi H.B."/>
        </authorList>
    </citation>
    <scope>NUCLEOTIDE SEQUENCE [LARGE SCALE GENOMIC DNA]</scope>
    <source>
        <strain>PCC 7424</strain>
    </source>
</reference>